<accession>A4QL76</accession>
<proteinExistence type="inferred from homology"/>
<geneLocation type="chloroplast"/>
<name>NU1C_DRANE</name>
<reference key="1">
    <citation type="submission" date="2007-03" db="EMBL/GenBank/DDBJ databases">
        <title>Sequencing analysis of Draba nemoroza chloroplast DNA.</title>
        <authorList>
            <person name="Hosouchi T."/>
            <person name="Tsuruoka H."/>
            <person name="Kotani H."/>
        </authorList>
    </citation>
    <scope>NUCLEOTIDE SEQUENCE [LARGE SCALE GENOMIC DNA]</scope>
    <source>
        <strain>JO21</strain>
    </source>
</reference>
<dbReference type="EC" id="7.1.1.-" evidence="1"/>
<dbReference type="EMBL" id="AP009373">
    <property type="protein sequence ID" value="BAF50431.1"/>
    <property type="molecule type" value="Genomic_DNA"/>
</dbReference>
<dbReference type="RefSeq" id="YP_001123606.1">
    <property type="nucleotide sequence ID" value="NC_009272.1"/>
</dbReference>
<dbReference type="SMR" id="A4QL76"/>
<dbReference type="GeneID" id="4964758"/>
<dbReference type="GO" id="GO:0009535">
    <property type="term" value="C:chloroplast thylakoid membrane"/>
    <property type="evidence" value="ECO:0007669"/>
    <property type="project" value="UniProtKB-SubCell"/>
</dbReference>
<dbReference type="GO" id="GO:0003954">
    <property type="term" value="F:NADH dehydrogenase activity"/>
    <property type="evidence" value="ECO:0007669"/>
    <property type="project" value="TreeGrafter"/>
</dbReference>
<dbReference type="GO" id="GO:0016655">
    <property type="term" value="F:oxidoreductase activity, acting on NAD(P)H, quinone or similar compound as acceptor"/>
    <property type="evidence" value="ECO:0007669"/>
    <property type="project" value="UniProtKB-UniRule"/>
</dbReference>
<dbReference type="GO" id="GO:0048038">
    <property type="term" value="F:quinone binding"/>
    <property type="evidence" value="ECO:0007669"/>
    <property type="project" value="UniProtKB-KW"/>
</dbReference>
<dbReference type="GO" id="GO:0009060">
    <property type="term" value="P:aerobic respiration"/>
    <property type="evidence" value="ECO:0007669"/>
    <property type="project" value="TreeGrafter"/>
</dbReference>
<dbReference type="GO" id="GO:0019684">
    <property type="term" value="P:photosynthesis, light reaction"/>
    <property type="evidence" value="ECO:0007669"/>
    <property type="project" value="UniProtKB-UniRule"/>
</dbReference>
<dbReference type="HAMAP" id="MF_01350">
    <property type="entry name" value="NDH1_NuoH"/>
    <property type="match status" value="1"/>
</dbReference>
<dbReference type="InterPro" id="IPR001694">
    <property type="entry name" value="NADH_UbQ_OxRdtase_su1/FPO"/>
</dbReference>
<dbReference type="InterPro" id="IPR018086">
    <property type="entry name" value="NADH_UbQ_OxRdtase_su1_CS"/>
</dbReference>
<dbReference type="NCBIfam" id="NF004741">
    <property type="entry name" value="PRK06076.1-2"/>
    <property type="match status" value="1"/>
</dbReference>
<dbReference type="PANTHER" id="PTHR11432">
    <property type="entry name" value="NADH DEHYDROGENASE SUBUNIT 1"/>
    <property type="match status" value="1"/>
</dbReference>
<dbReference type="PANTHER" id="PTHR11432:SF3">
    <property type="entry name" value="NADH-UBIQUINONE OXIDOREDUCTASE CHAIN 1"/>
    <property type="match status" value="1"/>
</dbReference>
<dbReference type="Pfam" id="PF00146">
    <property type="entry name" value="NADHdh"/>
    <property type="match status" value="1"/>
</dbReference>
<dbReference type="PROSITE" id="PS00667">
    <property type="entry name" value="COMPLEX1_ND1_1"/>
    <property type="match status" value="1"/>
</dbReference>
<dbReference type="PROSITE" id="PS00668">
    <property type="entry name" value="COMPLEX1_ND1_2"/>
    <property type="match status" value="1"/>
</dbReference>
<gene>
    <name evidence="1" type="primary">ndhA</name>
</gene>
<keyword id="KW-0150">Chloroplast</keyword>
<keyword id="KW-0472">Membrane</keyword>
<keyword id="KW-0520">NAD</keyword>
<keyword id="KW-0521">NADP</keyword>
<keyword id="KW-0934">Plastid</keyword>
<keyword id="KW-0618">Plastoquinone</keyword>
<keyword id="KW-0874">Quinone</keyword>
<keyword id="KW-0793">Thylakoid</keyword>
<keyword id="KW-1278">Translocase</keyword>
<keyword id="KW-0812">Transmembrane</keyword>
<keyword id="KW-1133">Transmembrane helix</keyword>
<comment type="function">
    <text evidence="1">NDH shuttles electrons from NAD(P)H:plastoquinone, via FMN and iron-sulfur (Fe-S) centers, to quinones in the photosynthetic chain and possibly in a chloroplast respiratory chain. The immediate electron acceptor for the enzyme in this species is believed to be plastoquinone. Couples the redox reaction to proton translocation, and thus conserves the redox energy in a proton gradient.</text>
</comment>
<comment type="catalytic activity">
    <reaction evidence="1">
        <text>a plastoquinone + NADH + (n+1) H(+)(in) = a plastoquinol + NAD(+) + n H(+)(out)</text>
        <dbReference type="Rhea" id="RHEA:42608"/>
        <dbReference type="Rhea" id="RHEA-COMP:9561"/>
        <dbReference type="Rhea" id="RHEA-COMP:9562"/>
        <dbReference type="ChEBI" id="CHEBI:15378"/>
        <dbReference type="ChEBI" id="CHEBI:17757"/>
        <dbReference type="ChEBI" id="CHEBI:57540"/>
        <dbReference type="ChEBI" id="CHEBI:57945"/>
        <dbReference type="ChEBI" id="CHEBI:62192"/>
    </reaction>
</comment>
<comment type="catalytic activity">
    <reaction evidence="1">
        <text>a plastoquinone + NADPH + (n+1) H(+)(in) = a plastoquinol + NADP(+) + n H(+)(out)</text>
        <dbReference type="Rhea" id="RHEA:42612"/>
        <dbReference type="Rhea" id="RHEA-COMP:9561"/>
        <dbReference type="Rhea" id="RHEA-COMP:9562"/>
        <dbReference type="ChEBI" id="CHEBI:15378"/>
        <dbReference type="ChEBI" id="CHEBI:17757"/>
        <dbReference type="ChEBI" id="CHEBI:57783"/>
        <dbReference type="ChEBI" id="CHEBI:58349"/>
        <dbReference type="ChEBI" id="CHEBI:62192"/>
    </reaction>
</comment>
<comment type="subunit">
    <text evidence="1">NDH is composed of at least 16 different subunits, 5 of which are encoded in the nucleus.</text>
</comment>
<comment type="subcellular location">
    <subcellularLocation>
        <location evidence="1">Plastid</location>
        <location evidence="1">Chloroplast thylakoid membrane</location>
        <topology evidence="1">Multi-pass membrane protein</topology>
    </subcellularLocation>
</comment>
<comment type="similarity">
    <text evidence="1">Belongs to the complex I subunit 1 family.</text>
</comment>
<evidence type="ECO:0000255" key="1">
    <source>
        <dbReference type="HAMAP-Rule" id="MF_01350"/>
    </source>
</evidence>
<organism>
    <name type="scientific">Draba nemorosa</name>
    <name type="common">Woodland whitlowgrass</name>
    <dbReference type="NCBI Taxonomy" id="171822"/>
    <lineage>
        <taxon>Eukaryota</taxon>
        <taxon>Viridiplantae</taxon>
        <taxon>Streptophyta</taxon>
        <taxon>Embryophyta</taxon>
        <taxon>Tracheophyta</taxon>
        <taxon>Spermatophyta</taxon>
        <taxon>Magnoliopsida</taxon>
        <taxon>eudicotyledons</taxon>
        <taxon>Gunneridae</taxon>
        <taxon>Pentapetalae</taxon>
        <taxon>rosids</taxon>
        <taxon>malvids</taxon>
        <taxon>Brassicales</taxon>
        <taxon>Brassicaceae</taxon>
        <taxon>Arabideae</taxon>
        <taxon>Draba</taxon>
    </lineage>
</organism>
<feature type="chain" id="PRO_0000298870" description="NAD(P)H-quinone oxidoreductase subunit 1, chloroplastic">
    <location>
        <begin position="1"/>
        <end position="360"/>
    </location>
</feature>
<feature type="transmembrane region" description="Helical" evidence="1">
    <location>
        <begin position="27"/>
        <end position="47"/>
    </location>
</feature>
<feature type="transmembrane region" description="Helical" evidence="1">
    <location>
        <begin position="98"/>
        <end position="118"/>
    </location>
</feature>
<feature type="transmembrane region" description="Helical" evidence="1">
    <location>
        <begin position="129"/>
        <end position="149"/>
    </location>
</feature>
<feature type="transmembrane region" description="Helical" evidence="1">
    <location>
        <begin position="165"/>
        <end position="185"/>
    </location>
</feature>
<feature type="transmembrane region" description="Helical" evidence="1">
    <location>
        <begin position="203"/>
        <end position="223"/>
    </location>
</feature>
<feature type="transmembrane region" description="Helical" evidence="1">
    <location>
        <begin position="253"/>
        <end position="273"/>
    </location>
</feature>
<feature type="transmembrane region" description="Helical" evidence="1">
    <location>
        <begin position="297"/>
        <end position="317"/>
    </location>
</feature>
<feature type="transmembrane region" description="Helical" evidence="1">
    <location>
        <begin position="340"/>
        <end position="360"/>
    </location>
</feature>
<sequence length="360" mass="39902">MIIYATEVETINSFVRLESLNEVYGLVWIFVPIFSLVLGIITGVLVIVWLERQISAGIQQRIGPEYAGPLGILQALADGTKLLFKEDLRPSRGNTPLFSIGPSIAVISILLSYSVIPFSNHLVLADLNIGIFLWIAISSIAPIGLLMSGYGSNNKYSFLGGLRAAAQSISYEIPLTLCVLSISLLSNSLSTVDIVEAQSKYGFWGWNLWRQPIGFIIFLISSLAECERLPFDLPEAEEELIAGYQTEYSGIKFGLFYVASYLNLLISALFVTILYLGGWNISIPYISILEVFKRNPVFGTTIGIFITLAKTYLVLVISIATRWTLPRLRMDQLLNLGWKFLLPISLGNLLLTTSFQLLSL</sequence>
<protein>
    <recommendedName>
        <fullName evidence="1">NAD(P)H-quinone oxidoreductase subunit 1, chloroplastic</fullName>
        <ecNumber evidence="1">7.1.1.-</ecNumber>
    </recommendedName>
    <alternativeName>
        <fullName evidence="1">NAD(P)H dehydrogenase subunit 1</fullName>
        <shortName evidence="1">NDH subunit 1</shortName>
    </alternativeName>
    <alternativeName>
        <fullName evidence="1">NADH-plastoquinone oxidoreductase subunit 1</fullName>
    </alternativeName>
</protein>